<sequence length="147" mass="16482">MPAKQAESDGLADRCKLRCRRSWGKCGLKLLHLLQPDPFNSCSVVDGIGADYLPPAVGSVKGVEDSETVVSDVYSRFERPLIVYSADRHNAREYLHDVETVSFGNESRWENNISFPTHHSFQSPQAASFRLSANPLQIPQTSFIIRF</sequence>
<organism>
    <name type="scientific">Archaeoglobus fulgidus (strain ATCC 49558 / DSM 4304 / JCM 9628 / NBRC 100126 / VC-16)</name>
    <dbReference type="NCBI Taxonomy" id="224325"/>
    <lineage>
        <taxon>Archaea</taxon>
        <taxon>Methanobacteriati</taxon>
        <taxon>Methanobacteriota</taxon>
        <taxon>Archaeoglobi</taxon>
        <taxon>Archaeoglobales</taxon>
        <taxon>Archaeoglobaceae</taxon>
        <taxon>Archaeoglobus</taxon>
    </lineage>
</organism>
<reference key="1">
    <citation type="journal article" date="1997" name="Nature">
        <title>The complete genome sequence of the hyperthermophilic, sulphate-reducing archaeon Archaeoglobus fulgidus.</title>
        <authorList>
            <person name="Klenk H.-P."/>
            <person name="Clayton R.A."/>
            <person name="Tomb J.-F."/>
            <person name="White O."/>
            <person name="Nelson K.E."/>
            <person name="Ketchum K.A."/>
            <person name="Dodson R.J."/>
            <person name="Gwinn M.L."/>
            <person name="Hickey E.K."/>
            <person name="Peterson J.D."/>
            <person name="Richardson D.L."/>
            <person name="Kerlavage A.R."/>
            <person name="Graham D.E."/>
            <person name="Kyrpides N.C."/>
            <person name="Fleischmann R.D."/>
            <person name="Quackenbush J."/>
            <person name="Lee N.H."/>
            <person name="Sutton G.G."/>
            <person name="Gill S.R."/>
            <person name="Kirkness E.F."/>
            <person name="Dougherty B.A."/>
            <person name="McKenney K."/>
            <person name="Adams M.D."/>
            <person name="Loftus B.J."/>
            <person name="Peterson S.N."/>
            <person name="Reich C.I."/>
            <person name="McNeil L.K."/>
            <person name="Badger J.H."/>
            <person name="Glodek A."/>
            <person name="Zhou L."/>
            <person name="Overbeek R."/>
            <person name="Gocayne J.D."/>
            <person name="Weidman J.F."/>
            <person name="McDonald L.A."/>
            <person name="Utterback T.R."/>
            <person name="Cotton M.D."/>
            <person name="Spriggs T."/>
            <person name="Artiach P."/>
            <person name="Kaine B.P."/>
            <person name="Sykes S.M."/>
            <person name="Sadow P.W."/>
            <person name="D'Andrea K.P."/>
            <person name="Bowman C."/>
            <person name="Fujii C."/>
            <person name="Garland S.A."/>
            <person name="Mason T.M."/>
            <person name="Olsen G.J."/>
            <person name="Fraser C.M."/>
            <person name="Smith H.O."/>
            <person name="Woese C.R."/>
            <person name="Venter J.C."/>
        </authorList>
    </citation>
    <scope>NUCLEOTIDE SEQUENCE [LARGE SCALE GENOMIC DNA]</scope>
    <source>
        <strain>ATCC 49558 / DSM 4304 / JCM 9628 / NBRC 100126 / VC-16</strain>
    </source>
</reference>
<accession>O28317</accession>
<protein>
    <recommendedName>
        <fullName>Uncharacterized protein AF_1962</fullName>
    </recommendedName>
</protein>
<feature type="chain" id="PRO_0000128077" description="Uncharacterized protein AF_1962">
    <location>
        <begin position="1"/>
        <end position="147"/>
    </location>
</feature>
<proteinExistence type="predicted"/>
<keyword id="KW-1185">Reference proteome</keyword>
<dbReference type="EMBL" id="AE000782">
    <property type="protein sequence ID" value="AAB89291.1"/>
    <property type="molecule type" value="Genomic_DNA"/>
</dbReference>
<dbReference type="PIR" id="A69495">
    <property type="entry name" value="A69495"/>
</dbReference>
<dbReference type="STRING" id="224325.AF_1962"/>
<dbReference type="PaxDb" id="224325-AF_1962"/>
<dbReference type="EnsemblBacteria" id="AAB89291">
    <property type="protein sequence ID" value="AAB89291"/>
    <property type="gene ID" value="AF_1962"/>
</dbReference>
<dbReference type="KEGG" id="afu:AF_1962"/>
<dbReference type="HOGENOM" id="CLU_1763768_0_0_2"/>
<dbReference type="Proteomes" id="UP000002199">
    <property type="component" value="Chromosome"/>
</dbReference>
<gene>
    <name type="ordered locus">AF_1962</name>
</gene>
<name>Y1962_ARCFU</name>